<reference key="1">
    <citation type="journal article" date="2005" name="Genome Res.">
        <title>Sequence, annotation, and analysis of synteny between rice chromosome 3 and diverged grass species.</title>
        <authorList>
            <consortium name="The rice chromosome 3 sequencing consortium"/>
            <person name="Buell C.R."/>
            <person name="Yuan Q."/>
            <person name="Ouyang S."/>
            <person name="Liu J."/>
            <person name="Zhu W."/>
            <person name="Wang A."/>
            <person name="Maiti R."/>
            <person name="Haas B."/>
            <person name="Wortman J."/>
            <person name="Pertea M."/>
            <person name="Jones K.M."/>
            <person name="Kim M."/>
            <person name="Overton L."/>
            <person name="Tsitrin T."/>
            <person name="Fadrosh D."/>
            <person name="Bera J."/>
            <person name="Weaver B."/>
            <person name="Jin S."/>
            <person name="Johri S."/>
            <person name="Reardon M."/>
            <person name="Webb K."/>
            <person name="Hill J."/>
            <person name="Moffat K."/>
            <person name="Tallon L."/>
            <person name="Van Aken S."/>
            <person name="Lewis M."/>
            <person name="Utterback T."/>
            <person name="Feldblyum T."/>
            <person name="Zismann V."/>
            <person name="Iobst S."/>
            <person name="Hsiao J."/>
            <person name="de Vazeille A.R."/>
            <person name="Salzberg S.L."/>
            <person name="White O."/>
            <person name="Fraser C.M."/>
            <person name="Yu Y."/>
            <person name="Kim H."/>
            <person name="Rambo T."/>
            <person name="Currie J."/>
            <person name="Collura K."/>
            <person name="Kernodle-Thompson S."/>
            <person name="Wei F."/>
            <person name="Kudrna K."/>
            <person name="Ammiraju J.S.S."/>
            <person name="Luo M."/>
            <person name="Goicoechea J.L."/>
            <person name="Wing R.A."/>
            <person name="Henry D."/>
            <person name="Oates R."/>
            <person name="Palmer M."/>
            <person name="Pries G."/>
            <person name="Saski C."/>
            <person name="Simmons J."/>
            <person name="Soderlund C."/>
            <person name="Nelson W."/>
            <person name="de la Bastide M."/>
            <person name="Spiegel L."/>
            <person name="Nascimento L."/>
            <person name="Huang E."/>
            <person name="Preston R."/>
            <person name="Zutavern T."/>
            <person name="Palmer L."/>
            <person name="O'Shaughnessy A."/>
            <person name="Dike S."/>
            <person name="McCombie W.R."/>
            <person name="Minx P."/>
            <person name="Cordum H."/>
            <person name="Wilson R."/>
            <person name="Jin W."/>
            <person name="Lee H.R."/>
            <person name="Jiang J."/>
            <person name="Jackson S."/>
        </authorList>
    </citation>
    <scope>NUCLEOTIDE SEQUENCE [LARGE SCALE GENOMIC DNA]</scope>
    <source>
        <strain>cv. Nipponbare</strain>
    </source>
</reference>
<reference key="2">
    <citation type="journal article" date="2005" name="Nature">
        <title>The map-based sequence of the rice genome.</title>
        <authorList>
            <consortium name="International rice genome sequencing project (IRGSP)"/>
        </authorList>
    </citation>
    <scope>NUCLEOTIDE SEQUENCE [LARGE SCALE GENOMIC DNA]</scope>
    <source>
        <strain>cv. Nipponbare</strain>
    </source>
</reference>
<reference key="3">
    <citation type="journal article" date="2008" name="Nucleic Acids Res.">
        <title>The rice annotation project database (RAP-DB): 2008 update.</title>
        <authorList>
            <consortium name="The rice annotation project (RAP)"/>
        </authorList>
    </citation>
    <scope>GENOME REANNOTATION</scope>
    <source>
        <strain>cv. Nipponbare</strain>
    </source>
</reference>
<reference key="4">
    <citation type="journal article" date="2013" name="Rice">
        <title>Improvement of the Oryza sativa Nipponbare reference genome using next generation sequence and optical map data.</title>
        <authorList>
            <person name="Kawahara Y."/>
            <person name="de la Bastide M."/>
            <person name="Hamilton J.P."/>
            <person name="Kanamori H."/>
            <person name="McCombie W.R."/>
            <person name="Ouyang S."/>
            <person name="Schwartz D.C."/>
            <person name="Tanaka T."/>
            <person name="Wu J."/>
            <person name="Zhou S."/>
            <person name="Childs K.L."/>
            <person name="Davidson R.M."/>
            <person name="Lin H."/>
            <person name="Quesada-Ocampo L."/>
            <person name="Vaillancourt B."/>
            <person name="Sakai H."/>
            <person name="Lee S.S."/>
            <person name="Kim J."/>
            <person name="Numa H."/>
            <person name="Itoh T."/>
            <person name="Buell C.R."/>
            <person name="Matsumoto T."/>
        </authorList>
    </citation>
    <scope>GENOME REANNOTATION</scope>
    <source>
        <strain>cv. Nipponbare</strain>
    </source>
</reference>
<reference key="5">
    <citation type="journal article" date="2005" name="PLoS Biol.">
        <title>The genomes of Oryza sativa: a history of duplications.</title>
        <authorList>
            <person name="Yu J."/>
            <person name="Wang J."/>
            <person name="Lin W."/>
            <person name="Li S."/>
            <person name="Li H."/>
            <person name="Zhou J."/>
            <person name="Ni P."/>
            <person name="Dong W."/>
            <person name="Hu S."/>
            <person name="Zeng C."/>
            <person name="Zhang J."/>
            <person name="Zhang Y."/>
            <person name="Li R."/>
            <person name="Xu Z."/>
            <person name="Li S."/>
            <person name="Li X."/>
            <person name="Zheng H."/>
            <person name="Cong L."/>
            <person name="Lin L."/>
            <person name="Yin J."/>
            <person name="Geng J."/>
            <person name="Li G."/>
            <person name="Shi J."/>
            <person name="Liu J."/>
            <person name="Lv H."/>
            <person name="Li J."/>
            <person name="Wang J."/>
            <person name="Deng Y."/>
            <person name="Ran L."/>
            <person name="Shi X."/>
            <person name="Wang X."/>
            <person name="Wu Q."/>
            <person name="Li C."/>
            <person name="Ren X."/>
            <person name="Wang J."/>
            <person name="Wang X."/>
            <person name="Li D."/>
            <person name="Liu D."/>
            <person name="Zhang X."/>
            <person name="Ji Z."/>
            <person name="Zhao W."/>
            <person name="Sun Y."/>
            <person name="Zhang Z."/>
            <person name="Bao J."/>
            <person name="Han Y."/>
            <person name="Dong L."/>
            <person name="Ji J."/>
            <person name="Chen P."/>
            <person name="Wu S."/>
            <person name="Liu J."/>
            <person name="Xiao Y."/>
            <person name="Bu D."/>
            <person name="Tan J."/>
            <person name="Yang L."/>
            <person name="Ye C."/>
            <person name="Zhang J."/>
            <person name="Xu J."/>
            <person name="Zhou Y."/>
            <person name="Yu Y."/>
            <person name="Zhang B."/>
            <person name="Zhuang S."/>
            <person name="Wei H."/>
            <person name="Liu B."/>
            <person name="Lei M."/>
            <person name="Yu H."/>
            <person name="Li Y."/>
            <person name="Xu H."/>
            <person name="Wei S."/>
            <person name="He X."/>
            <person name="Fang L."/>
            <person name="Zhang Z."/>
            <person name="Zhang Y."/>
            <person name="Huang X."/>
            <person name="Su Z."/>
            <person name="Tong W."/>
            <person name="Li J."/>
            <person name="Tong Z."/>
            <person name="Li S."/>
            <person name="Ye J."/>
            <person name="Wang L."/>
            <person name="Fang L."/>
            <person name="Lei T."/>
            <person name="Chen C.-S."/>
            <person name="Chen H.-C."/>
            <person name="Xu Z."/>
            <person name="Li H."/>
            <person name="Huang H."/>
            <person name="Zhang F."/>
            <person name="Xu H."/>
            <person name="Li N."/>
            <person name="Zhao C."/>
            <person name="Li S."/>
            <person name="Dong L."/>
            <person name="Huang Y."/>
            <person name="Li L."/>
            <person name="Xi Y."/>
            <person name="Qi Q."/>
            <person name="Li W."/>
            <person name="Zhang B."/>
            <person name="Hu W."/>
            <person name="Zhang Y."/>
            <person name="Tian X."/>
            <person name="Jiao Y."/>
            <person name="Liang X."/>
            <person name="Jin J."/>
            <person name="Gao L."/>
            <person name="Zheng W."/>
            <person name="Hao B."/>
            <person name="Liu S.-M."/>
            <person name="Wang W."/>
            <person name="Yuan L."/>
            <person name="Cao M."/>
            <person name="McDermott J."/>
            <person name="Samudrala R."/>
            <person name="Wang J."/>
            <person name="Wong G.K.-S."/>
            <person name="Yang H."/>
        </authorList>
    </citation>
    <scope>NUCLEOTIDE SEQUENCE [LARGE SCALE GENOMIC DNA]</scope>
    <source>
        <strain>cv. Nipponbare</strain>
    </source>
</reference>
<reference key="6">
    <citation type="journal article" date="2004" name="Plant Physiol.">
        <title>The GATA family of transcription factors in Arabidopsis and rice.</title>
        <authorList>
            <person name="Reyes J.C."/>
            <person name="Muro-Pastor M.I."/>
            <person name="Florencio F.J."/>
        </authorList>
    </citation>
    <scope>GENE FAMILY</scope>
    <scope>NOMENCLATURE</scope>
</reference>
<reference key="7">
    <citation type="journal article" date="2009" name="Plant Mol. Biol.">
        <title>Identification and expression profiling analysis of TIFY family genes involved in stress and phytohormone responses in rice.</title>
        <authorList>
            <person name="Ye H."/>
            <person name="Du H."/>
            <person name="Tang N."/>
            <person name="Li X."/>
            <person name="Xiong L."/>
        </authorList>
    </citation>
    <scope>GENE FAMILY</scope>
    <scope>NOMENCLATURE</scope>
    <scope>INDUCTION</scope>
</reference>
<accession>Q0DNU1</accession>
<accession>A0A0N7KI02</accession>
<accession>B9FBN5</accession>
<accession>Q10DB3</accession>
<accession>Q6AVT1</accession>
<feature type="chain" id="PRO_0000434836" description="GATA transcription factor 19">
    <location>
        <begin position="1"/>
        <end position="271"/>
    </location>
</feature>
<feature type="domain" description="Tify" evidence="4">
    <location>
        <begin position="33"/>
        <end position="68"/>
    </location>
</feature>
<feature type="domain" description="CCT" evidence="3">
    <location>
        <begin position="95"/>
        <end position="137"/>
    </location>
</feature>
<feature type="zinc finger region" description="GATA-type" evidence="2">
    <location>
        <begin position="166"/>
        <end position="193"/>
    </location>
</feature>
<feature type="region of interest" description="Disordered" evidence="5">
    <location>
        <begin position="1"/>
        <end position="23"/>
    </location>
</feature>
<feature type="region of interest" description="Disordered" evidence="5">
    <location>
        <begin position="238"/>
        <end position="271"/>
    </location>
</feature>
<feature type="compositionally biased region" description="Basic and acidic residues" evidence="5">
    <location>
        <begin position="252"/>
        <end position="271"/>
    </location>
</feature>
<evidence type="ECO:0000250" key="1">
    <source>
        <dbReference type="UniProtKB" id="Q8LAU9"/>
    </source>
</evidence>
<evidence type="ECO:0000255" key="2">
    <source>
        <dbReference type="PROSITE-ProRule" id="PRU00094"/>
    </source>
</evidence>
<evidence type="ECO:0000255" key="3">
    <source>
        <dbReference type="PROSITE-ProRule" id="PRU00357"/>
    </source>
</evidence>
<evidence type="ECO:0000255" key="4">
    <source>
        <dbReference type="PROSITE-ProRule" id="PRU00650"/>
    </source>
</evidence>
<evidence type="ECO:0000256" key="5">
    <source>
        <dbReference type="SAM" id="MobiDB-lite"/>
    </source>
</evidence>
<evidence type="ECO:0000269" key="6">
    <source>
    </source>
</evidence>
<evidence type="ECO:0000303" key="7">
    <source>
    </source>
</evidence>
<evidence type="ECO:0000303" key="8">
    <source>
    </source>
</evidence>
<evidence type="ECO:0000305" key="9"/>
<evidence type="ECO:0000312" key="10">
    <source>
        <dbReference type="EMBL" id="AAT78796.1"/>
    </source>
</evidence>
<evidence type="ECO:0000312" key="11">
    <source>
        <dbReference type="EMBL" id="ABF98730.1"/>
    </source>
</evidence>
<evidence type="ECO:0000312" key="12">
    <source>
        <dbReference type="EMBL" id="BAF13097.2"/>
    </source>
</evidence>
<evidence type="ECO:0000312" key="13">
    <source>
        <dbReference type="EMBL" id="EEE59877.1"/>
    </source>
</evidence>
<proteinExistence type="evidence at transcript level"/>
<dbReference type="EMBL" id="AC096689">
    <property type="protein sequence ID" value="AAT78796.1"/>
    <property type="status" value="ALT_SEQ"/>
    <property type="molecule type" value="Genomic_DNA"/>
</dbReference>
<dbReference type="EMBL" id="DP000009">
    <property type="protein sequence ID" value="ABF98730.1"/>
    <property type="status" value="ALT_SEQ"/>
    <property type="molecule type" value="Genomic_DNA"/>
</dbReference>
<dbReference type="EMBL" id="AP008209">
    <property type="protein sequence ID" value="BAF13097.2"/>
    <property type="molecule type" value="Genomic_DNA"/>
</dbReference>
<dbReference type="EMBL" id="AP014959">
    <property type="protein sequence ID" value="BAS86249.1"/>
    <property type="molecule type" value="Genomic_DNA"/>
</dbReference>
<dbReference type="EMBL" id="CM000140">
    <property type="protein sequence ID" value="EEE59877.1"/>
    <property type="molecule type" value="Genomic_DNA"/>
</dbReference>
<dbReference type="RefSeq" id="XP_015632019.1">
    <property type="nucleotide sequence ID" value="XM_015776533.1"/>
</dbReference>
<dbReference type="RefSeq" id="XP_015632020.1">
    <property type="nucleotide sequence ID" value="XM_015776534.1"/>
</dbReference>
<dbReference type="SMR" id="Q0DNU1"/>
<dbReference type="STRING" id="39947.Q0DNU1"/>
<dbReference type="PaxDb" id="39947-Q0DNU1"/>
<dbReference type="EnsemblPlants" id="Os03t0734900-00">
    <property type="protein sequence ID" value="Os03t0734900-00"/>
    <property type="gene ID" value="Os03g0734900"/>
</dbReference>
<dbReference type="Gramene" id="Os03t0734900-00">
    <property type="protein sequence ID" value="Os03t0734900-00"/>
    <property type="gene ID" value="Os03g0734900"/>
</dbReference>
<dbReference type="KEGG" id="dosa:Os03g0734900"/>
<dbReference type="eggNOG" id="KOG1601">
    <property type="taxonomic scope" value="Eukaryota"/>
</dbReference>
<dbReference type="HOGENOM" id="CLU_057264_1_1_1"/>
<dbReference type="InParanoid" id="Q0DNU1"/>
<dbReference type="OMA" id="PINAPKM"/>
<dbReference type="OrthoDB" id="2162994at2759"/>
<dbReference type="PlantReactome" id="R-OSA-6787011">
    <property type="pathway name" value="Jasmonic acid signaling"/>
</dbReference>
<dbReference type="Proteomes" id="UP000000763">
    <property type="component" value="Chromosome 3"/>
</dbReference>
<dbReference type="Proteomes" id="UP000007752">
    <property type="component" value="Chromosome 3"/>
</dbReference>
<dbReference type="Proteomes" id="UP000059680">
    <property type="component" value="Chromosome 3"/>
</dbReference>
<dbReference type="GO" id="GO:0005634">
    <property type="term" value="C:nucleus"/>
    <property type="evidence" value="ECO:0007669"/>
    <property type="project" value="UniProtKB-SubCell"/>
</dbReference>
<dbReference type="GO" id="GO:0043565">
    <property type="term" value="F:sequence-specific DNA binding"/>
    <property type="evidence" value="ECO:0007669"/>
    <property type="project" value="InterPro"/>
</dbReference>
<dbReference type="GO" id="GO:0008270">
    <property type="term" value="F:zinc ion binding"/>
    <property type="evidence" value="ECO:0007669"/>
    <property type="project" value="UniProtKB-KW"/>
</dbReference>
<dbReference type="GO" id="GO:0006355">
    <property type="term" value="P:regulation of DNA-templated transcription"/>
    <property type="evidence" value="ECO:0007669"/>
    <property type="project" value="InterPro"/>
</dbReference>
<dbReference type="CDD" id="cd00202">
    <property type="entry name" value="ZnF_GATA"/>
    <property type="match status" value="1"/>
</dbReference>
<dbReference type="Gene3D" id="3.30.50.10">
    <property type="entry name" value="Erythroid Transcription Factor GATA-1, subunit A"/>
    <property type="match status" value="1"/>
</dbReference>
<dbReference type="InterPro" id="IPR010402">
    <property type="entry name" value="CCT_domain"/>
</dbReference>
<dbReference type="InterPro" id="IPR045280">
    <property type="entry name" value="TIFY-like"/>
</dbReference>
<dbReference type="InterPro" id="IPR010399">
    <property type="entry name" value="Tify_dom"/>
</dbReference>
<dbReference type="InterPro" id="IPR000679">
    <property type="entry name" value="Znf_GATA"/>
</dbReference>
<dbReference type="InterPro" id="IPR013088">
    <property type="entry name" value="Znf_NHR/GATA"/>
</dbReference>
<dbReference type="PANTHER" id="PTHR46125:SF13">
    <property type="entry name" value="GATA TRANSCRIPTION FACTOR 19"/>
    <property type="match status" value="1"/>
</dbReference>
<dbReference type="PANTHER" id="PTHR46125">
    <property type="entry name" value="GATA TRANSCRIPTION FACTOR 28"/>
    <property type="match status" value="1"/>
</dbReference>
<dbReference type="Pfam" id="PF06203">
    <property type="entry name" value="CCT"/>
    <property type="match status" value="1"/>
</dbReference>
<dbReference type="Pfam" id="PF00320">
    <property type="entry name" value="GATA"/>
    <property type="match status" value="1"/>
</dbReference>
<dbReference type="Pfam" id="PF06200">
    <property type="entry name" value="tify"/>
    <property type="match status" value="1"/>
</dbReference>
<dbReference type="SMART" id="SM00979">
    <property type="entry name" value="TIFY"/>
    <property type="match status" value="1"/>
</dbReference>
<dbReference type="SMART" id="SM00401">
    <property type="entry name" value="ZnF_GATA"/>
    <property type="match status" value="1"/>
</dbReference>
<dbReference type="SUPFAM" id="SSF57716">
    <property type="entry name" value="Glucocorticoid receptor-like (DNA-binding domain)"/>
    <property type="match status" value="1"/>
</dbReference>
<dbReference type="PROSITE" id="PS51017">
    <property type="entry name" value="CCT"/>
    <property type="match status" value="1"/>
</dbReference>
<dbReference type="PROSITE" id="PS00344">
    <property type="entry name" value="GATA_ZN_FINGER_1"/>
    <property type="match status" value="1"/>
</dbReference>
<dbReference type="PROSITE" id="PS51320">
    <property type="entry name" value="TIFY"/>
    <property type="match status" value="1"/>
</dbReference>
<comment type="function">
    <text evidence="1">Transcriptional activator that specifically binds 5'-GATA-3' or 5'-GAT-3' motifs within gene promoters.</text>
</comment>
<comment type="subcellular location">
    <subcellularLocation>
        <location evidence="3">Nucleus</location>
    </subcellularLocation>
</comment>
<comment type="induction">
    <text evidence="6">By abscisic acid (ABA), and drought and salt stresses. Down-regulated by jasmonate and wounding.</text>
</comment>
<comment type="similarity">
    <text evidence="9">Belongs to the type IV zinc-finger family. Class C subfamily.</text>
</comment>
<comment type="sequence caution" evidence="9">
    <conflict type="erroneous gene model prediction">
        <sequence resource="EMBL-CDS" id="AAT78796"/>
    </conflict>
</comment>
<comment type="sequence caution" evidence="9">
    <conflict type="erroneous gene model prediction">
        <sequence resource="EMBL-CDS" id="ABF98730"/>
    </conflict>
</comment>
<sequence length="271" mass="29028">MAAEPPADGRDPPADDGAAGDGAVESAAAEALLSAASEQLTLVYQGEVYVFDPVPPQKVQAVLLVLGGSDMPPGLVSMAVPTTFDEKSTTVAARRVASLMRFREKRKERCFDKKIRYSVRKEVAQKMKRRKGQFAGRADFGDGSCSSAPCGSTANGEDDHIRETHCQNCGISSRLTPAMRRGPAGPRSLCNACGLMWANKGTLRSPLNAPKMTVQHPADLSKTGDTDDSKANLCAEHNQTTMKTDTEMVPEQEQKADVLPPTKEEDSMATS</sequence>
<organism>
    <name type="scientific">Oryza sativa subsp. japonica</name>
    <name type="common">Rice</name>
    <dbReference type="NCBI Taxonomy" id="39947"/>
    <lineage>
        <taxon>Eukaryota</taxon>
        <taxon>Viridiplantae</taxon>
        <taxon>Streptophyta</taxon>
        <taxon>Embryophyta</taxon>
        <taxon>Tracheophyta</taxon>
        <taxon>Spermatophyta</taxon>
        <taxon>Magnoliopsida</taxon>
        <taxon>Liliopsida</taxon>
        <taxon>Poales</taxon>
        <taxon>Poaceae</taxon>
        <taxon>BOP clade</taxon>
        <taxon>Oryzoideae</taxon>
        <taxon>Oryzeae</taxon>
        <taxon>Oryzinae</taxon>
        <taxon>Oryza</taxon>
        <taxon>Oryza sativa</taxon>
    </lineage>
</organism>
<name>GAT19_ORYSJ</name>
<gene>
    <name evidence="7" type="primary">GATA19</name>
    <name evidence="8" type="synonym">TIFY1B</name>
    <name evidence="12" type="ordered locus">Os03g0734900</name>
    <name evidence="11" type="ordered locus">LOC_Os03g52450</name>
    <name evidence="13" type="ORF">OsJ_12477</name>
    <name evidence="10" type="ORF">OSJNBa0027J18.9</name>
</gene>
<keyword id="KW-0010">Activator</keyword>
<keyword id="KW-0238">DNA-binding</keyword>
<keyword id="KW-0479">Metal-binding</keyword>
<keyword id="KW-0539">Nucleus</keyword>
<keyword id="KW-1185">Reference proteome</keyword>
<keyword id="KW-0804">Transcription</keyword>
<keyword id="KW-0805">Transcription regulation</keyword>
<keyword id="KW-0862">Zinc</keyword>
<keyword id="KW-0863">Zinc-finger</keyword>
<protein>
    <recommendedName>
        <fullName evidence="7">GATA transcription factor 19</fullName>
        <shortName evidence="7">OsGATA19</shortName>
    </recommendedName>
    <alternativeName>
        <fullName evidence="9">Protein TIFY 1b</fullName>
        <shortName evidence="8">OsTIFY1b</shortName>
    </alternativeName>
</protein>